<protein>
    <recommendedName>
        <fullName evidence="11">NADH--cytochrome b5 reductase 1</fullName>
        <ecNumber evidence="6 10">1.6.2.2</ecNumber>
    </recommendedName>
</protein>
<sequence>MDTEFLRTLDRQILLGVFVAFVAVGAGAAYFLTSSKKRRVCLDPENFKEFKLVKRHQLSHNVAKFVFELPTSTSVLGLPIGQHISCRGKDGQGEDVIKPYTPTTLDSDVGRFELVIKMYPQGRMSHHFREMRVGDHLAVKGPKGRFKYQPGQFRAFGMLAGGSGITPMFQVARAILENPTDKTKVHLIYANVTYDDILLKEELEGLTTNYPEQFKIFYVLNQPPEVWDGGVGFVSKEMIQTHCPAPASDIQILRCGPPPMNKAMAANLEALGYSPEMQFQF</sequence>
<keyword id="KW-0274">FAD</keyword>
<keyword id="KW-0285">Flavoprotein</keyword>
<keyword id="KW-0472">Membrane</keyword>
<keyword id="KW-0496">Mitochondrion</keyword>
<keyword id="KW-1000">Mitochondrion outer membrane</keyword>
<keyword id="KW-0520">NAD</keyword>
<keyword id="KW-0560">Oxidoreductase</keyword>
<keyword id="KW-0597">Phosphoprotein</keyword>
<keyword id="KW-1185">Reference proteome</keyword>
<keyword id="KW-0812">Transmembrane</keyword>
<keyword id="KW-1133">Transmembrane helix</keyword>
<proteinExistence type="evidence at protein level"/>
<name>NB5R1_ARATH</name>
<gene>
    <name evidence="11" type="primary">CBR1</name>
    <name evidence="12" type="synonym">CBR</name>
    <name evidence="14" type="ordered locus">At5g17770</name>
    <name evidence="15" type="ORF">MVA3.13</name>
</gene>
<reference key="1">
    <citation type="journal article" date="1999" name="Plant Physiol.">
        <title>Microsomal electron transfer in higher plants: cloning and heterologous expression of NADH-cytochrome b5 reductase from Arabidopsis.</title>
        <authorList>
            <person name="Fukuchi-Mizutani M."/>
            <person name="Mizutani M."/>
            <person name="Tanaka Y."/>
            <person name="Kusumi T."/>
            <person name="Ohta D."/>
        </authorList>
    </citation>
    <scope>NUCLEOTIDE SEQUENCE [MRNA]</scope>
    <scope>FUNCTION</scope>
    <scope>CATALYTIC ACTIVITY</scope>
    <scope>TISSUE SPECIFICITY</scope>
    <scope>BIOPHYSICOCHEMICAL PROPERTIES</scope>
</reference>
<reference key="2">
    <citation type="journal article" date="1997" name="DNA Res.">
        <title>Structural analysis of Arabidopsis thaliana chromosome 5. II. Sequence features of the regions of 1,044,062 bp covered by thirteen physically assigned P1 clones.</title>
        <authorList>
            <person name="Kotani H."/>
            <person name="Nakamura Y."/>
            <person name="Sato S."/>
            <person name="Kaneko T."/>
            <person name="Asamizu E."/>
            <person name="Miyajima N."/>
            <person name="Tabata S."/>
        </authorList>
    </citation>
    <scope>NUCLEOTIDE SEQUENCE [LARGE SCALE GENOMIC DNA]</scope>
    <source>
        <strain>cv. Columbia</strain>
    </source>
</reference>
<reference key="3">
    <citation type="journal article" date="2017" name="Plant J.">
        <title>Araport11: a complete reannotation of the Arabidopsis thaliana reference genome.</title>
        <authorList>
            <person name="Cheng C.Y."/>
            <person name="Krishnakumar V."/>
            <person name="Chan A.P."/>
            <person name="Thibaud-Nissen F."/>
            <person name="Schobel S."/>
            <person name="Town C.D."/>
        </authorList>
    </citation>
    <scope>GENOME REANNOTATION</scope>
    <source>
        <strain>cv. Columbia</strain>
    </source>
</reference>
<reference key="4">
    <citation type="journal article" date="2003" name="Science">
        <title>Empirical analysis of transcriptional activity in the Arabidopsis genome.</title>
        <authorList>
            <person name="Yamada K."/>
            <person name="Lim J."/>
            <person name="Dale J.M."/>
            <person name="Chen H."/>
            <person name="Shinn P."/>
            <person name="Palm C.J."/>
            <person name="Southwick A.M."/>
            <person name="Wu H.C."/>
            <person name="Kim C.J."/>
            <person name="Nguyen M."/>
            <person name="Pham P.K."/>
            <person name="Cheuk R.F."/>
            <person name="Karlin-Newmann G."/>
            <person name="Liu S.X."/>
            <person name="Lam B."/>
            <person name="Sakano H."/>
            <person name="Wu T."/>
            <person name="Yu G."/>
            <person name="Miranda M."/>
            <person name="Quach H.L."/>
            <person name="Tripp M."/>
            <person name="Chang C.H."/>
            <person name="Lee J.M."/>
            <person name="Toriumi M.J."/>
            <person name="Chan M.M."/>
            <person name="Tang C.C."/>
            <person name="Onodera C.S."/>
            <person name="Deng J.M."/>
            <person name="Akiyama K."/>
            <person name="Ansari Y."/>
            <person name="Arakawa T."/>
            <person name="Banh J."/>
            <person name="Banno F."/>
            <person name="Bowser L."/>
            <person name="Brooks S.Y."/>
            <person name="Carninci P."/>
            <person name="Chao Q."/>
            <person name="Choy N."/>
            <person name="Enju A."/>
            <person name="Goldsmith A.D."/>
            <person name="Gurjal M."/>
            <person name="Hansen N.F."/>
            <person name="Hayashizaki Y."/>
            <person name="Johnson-Hopson C."/>
            <person name="Hsuan V.W."/>
            <person name="Iida K."/>
            <person name="Karnes M."/>
            <person name="Khan S."/>
            <person name="Koesema E."/>
            <person name="Ishida J."/>
            <person name="Jiang P.X."/>
            <person name="Jones T."/>
            <person name="Kawai J."/>
            <person name="Kamiya A."/>
            <person name="Meyers C."/>
            <person name="Nakajima M."/>
            <person name="Narusaka M."/>
            <person name="Seki M."/>
            <person name="Sakurai T."/>
            <person name="Satou M."/>
            <person name="Tamse R."/>
            <person name="Vaysberg M."/>
            <person name="Wallender E.K."/>
            <person name="Wong C."/>
            <person name="Yamamura Y."/>
            <person name="Yuan S."/>
            <person name="Shinozaki K."/>
            <person name="Davis R.W."/>
            <person name="Theologis A."/>
            <person name="Ecker J.R."/>
        </authorList>
    </citation>
    <scope>NUCLEOTIDE SEQUENCE [LARGE SCALE MRNA]</scope>
    <source>
        <strain>cv. Columbia</strain>
    </source>
</reference>
<reference key="5">
    <citation type="journal article" date="2009" name="DNA Res.">
        <title>Analysis of multiple occurrences of alternative splicing events in Arabidopsis thaliana using novel sequenced full-length cDNAs.</title>
        <authorList>
            <person name="Iida K."/>
            <person name="Fukami-Kobayashi K."/>
            <person name="Toyoda A."/>
            <person name="Sakaki Y."/>
            <person name="Kobayashi M."/>
            <person name="Seki M."/>
            <person name="Shinozaki K."/>
        </authorList>
    </citation>
    <scope>NUCLEOTIDE SEQUENCE [LARGE SCALE MRNA]</scope>
    <source>
        <strain>cv. Columbia</strain>
        <tissue>Rosette leaf</tissue>
    </source>
</reference>
<reference key="6">
    <citation type="submission" date="2002-03" db="EMBL/GenBank/DDBJ databases">
        <title>Full-length cDNA from Arabidopsis thaliana.</title>
        <authorList>
            <person name="Brover V.V."/>
            <person name="Troukhan M.E."/>
            <person name="Alexandrov N.A."/>
            <person name="Lu Y.-P."/>
            <person name="Flavell R.B."/>
            <person name="Feldmann K.A."/>
        </authorList>
    </citation>
    <scope>NUCLEOTIDE SEQUENCE [LARGE SCALE MRNA]</scope>
</reference>
<reference key="7">
    <citation type="journal article" date="2006" name="Plant J.">
        <title>A mutation in Arabidopsis cytochrome b5 reductase identified by high-throughput screening differentially affects hydroxylation and desaturation.</title>
        <authorList>
            <person name="Kumar R."/>
            <person name="Wallis J.G."/>
            <person name="Skidmore C."/>
            <person name="Browse J."/>
        </authorList>
    </citation>
    <scope>FUNCTION</scope>
    <scope>CATALYTIC ACTIVITY</scope>
    <scope>MUTAGENESIS OF LEU-78</scope>
    <scope>NOMENCLATURE</scope>
</reference>
<reference key="8">
    <citation type="journal article" date="2010" name="Plant Cell">
        <title>ANKYRIN REPEAT-CONTAINING PROTEIN 2A is an essential molecular chaperone for peroxisomal membrane-bound ASCORBATE PEROXIDASE3 in Arabidopsis.</title>
        <authorList>
            <person name="Shen G."/>
            <person name="Kuppu S."/>
            <person name="Venkataramani S."/>
            <person name="Wang J."/>
            <person name="Yan J."/>
            <person name="Qiu X."/>
            <person name="Zhang H."/>
        </authorList>
    </citation>
    <scope>INTERACTION WITH AKR2A</scope>
    <source>
        <strain>cv. C24</strain>
        <strain>cv. Columbia</strain>
    </source>
</reference>
<reference key="9">
    <citation type="journal article" date="2010" name="Plant Signal. Behav.">
        <title>Is AKR2A an essential molecular chaperone for a class of membrane-bound proteins in plants?</title>
        <authorList>
            <person name="Zhang H."/>
            <person name="Li X."/>
            <person name="Zhang Y."/>
            <person name="Kuppu S."/>
            <person name="Shen G."/>
        </authorList>
    </citation>
    <scope>AKR2A-BINDING SEQUENCE</scope>
    <scope>REVIEW</scope>
</reference>
<reference key="10">
    <citation type="journal article" date="2011" name="Plant Physiol.">
        <title>Multiple lines of evidence localize signaling, morphology, and lipid biosynthesis machinery to the mitochondrial outer membrane of Arabidopsis.</title>
        <authorList>
            <person name="Duncan O."/>
            <person name="Taylor N.L."/>
            <person name="Carrie C."/>
            <person name="Eubel H."/>
            <person name="Kubiszewski-Jakubiak S."/>
            <person name="Zhang B."/>
            <person name="Narsai R."/>
            <person name="Millar A.H."/>
            <person name="Whelan J."/>
        </authorList>
    </citation>
    <scope>SUBCELLULAR LOCATION</scope>
</reference>
<feature type="chain" id="PRO_0000419622" description="NADH--cytochrome b5 reductase 1">
    <location>
        <begin position="1"/>
        <end position="281"/>
    </location>
</feature>
<feature type="transmembrane region" description="Helical" evidence="4">
    <location>
        <begin position="13"/>
        <end position="33"/>
    </location>
</feature>
<feature type="domain" description="FAD-binding FR-type" evidence="5">
    <location>
        <begin position="45"/>
        <end position="149"/>
    </location>
</feature>
<feature type="short sequence motif" description="AKR2A-binding sequence (ABS) required for mitochondrion outer membrane targeting" evidence="8">
    <location>
        <begin position="34"/>
        <end position="40"/>
    </location>
</feature>
<feature type="binding site" evidence="1">
    <location>
        <begin position="129"/>
        <end position="144"/>
    </location>
    <ligand>
        <name>FAD</name>
        <dbReference type="ChEBI" id="CHEBI:57692"/>
    </ligand>
</feature>
<feature type="binding site" evidence="1">
    <location>
        <begin position="155"/>
        <end position="187"/>
    </location>
    <ligand>
        <name>FAD</name>
        <dbReference type="ChEBI" id="CHEBI:57692"/>
    </ligand>
</feature>
<feature type="modified residue" description="Phosphothreonine" evidence="2">
    <location>
        <position position="166"/>
    </location>
</feature>
<feature type="mutagenesis site" description="In cbr1-1; decreased stability and decreased activity." evidence="6">
    <original>L</original>
    <variation>F</variation>
    <location>
        <position position="78"/>
    </location>
</feature>
<dbReference type="EC" id="1.6.2.2" evidence="6 10"/>
<dbReference type="EMBL" id="AB007799">
    <property type="protein sequence ID" value="BAA74837.1"/>
    <property type="molecule type" value="mRNA"/>
</dbReference>
<dbReference type="EMBL" id="AB007800">
    <property type="protein sequence ID" value="BAA74838.1"/>
    <property type="molecule type" value="Genomic_DNA"/>
</dbReference>
<dbReference type="EMBL" id="AB006706">
    <property type="protein sequence ID" value="BAB09576.1"/>
    <property type="molecule type" value="Genomic_DNA"/>
</dbReference>
<dbReference type="EMBL" id="CP002688">
    <property type="protein sequence ID" value="AED92466.1"/>
    <property type="molecule type" value="Genomic_DNA"/>
</dbReference>
<dbReference type="EMBL" id="AY059822">
    <property type="protein sequence ID" value="AAL24304.1"/>
    <property type="status" value="ALT_FRAME"/>
    <property type="molecule type" value="mRNA"/>
</dbReference>
<dbReference type="EMBL" id="AY072482">
    <property type="protein sequence ID" value="AAL66897.1"/>
    <property type="molecule type" value="mRNA"/>
</dbReference>
<dbReference type="EMBL" id="AK316787">
    <property type="protein sequence ID" value="BAH19505.1"/>
    <property type="molecule type" value="mRNA"/>
</dbReference>
<dbReference type="EMBL" id="AY085728">
    <property type="protein sequence ID" value="AAM62946.1"/>
    <property type="molecule type" value="mRNA"/>
</dbReference>
<dbReference type="PIR" id="T52470">
    <property type="entry name" value="T52470"/>
</dbReference>
<dbReference type="RefSeq" id="NP_197279.1">
    <property type="nucleotide sequence ID" value="NM_121783.5"/>
</dbReference>
<dbReference type="SMR" id="Q9ZNT1"/>
<dbReference type="BioGRID" id="16921">
    <property type="interactions" value="3"/>
</dbReference>
<dbReference type="FunCoup" id="Q9ZNT1">
    <property type="interactions" value="3200"/>
</dbReference>
<dbReference type="STRING" id="3702.Q9ZNT1"/>
<dbReference type="PaxDb" id="3702-AT5G17770.1"/>
<dbReference type="ProteomicsDB" id="251248"/>
<dbReference type="EnsemblPlants" id="AT5G17770.1">
    <property type="protein sequence ID" value="AT5G17770.1"/>
    <property type="gene ID" value="AT5G17770"/>
</dbReference>
<dbReference type="GeneID" id="831645"/>
<dbReference type="Gramene" id="AT5G17770.1">
    <property type="protein sequence ID" value="AT5G17770.1"/>
    <property type="gene ID" value="AT5G17770"/>
</dbReference>
<dbReference type="KEGG" id="ath:AT5G17770"/>
<dbReference type="Araport" id="AT5G17770"/>
<dbReference type="TAIR" id="AT5G17770">
    <property type="gene designation" value="CBR"/>
</dbReference>
<dbReference type="eggNOG" id="KOG0534">
    <property type="taxonomic scope" value="Eukaryota"/>
</dbReference>
<dbReference type="HOGENOM" id="CLU_003827_9_2_1"/>
<dbReference type="InParanoid" id="Q9ZNT1"/>
<dbReference type="OMA" id="VQIFMCG"/>
<dbReference type="PhylomeDB" id="Q9ZNT1"/>
<dbReference type="BioCyc" id="ARA:AT5G17770-MONOMER"/>
<dbReference type="PRO" id="PR:Q9ZNT1"/>
<dbReference type="Proteomes" id="UP000006548">
    <property type="component" value="Chromosome 5"/>
</dbReference>
<dbReference type="ExpressionAtlas" id="Q9ZNT1">
    <property type="expression patterns" value="baseline and differential"/>
</dbReference>
<dbReference type="GO" id="GO:0005783">
    <property type="term" value="C:endoplasmic reticulum"/>
    <property type="evidence" value="ECO:0007005"/>
    <property type="project" value="TAIR"/>
</dbReference>
<dbReference type="GO" id="GO:0005741">
    <property type="term" value="C:mitochondrial outer membrane"/>
    <property type="evidence" value="ECO:0007669"/>
    <property type="project" value="UniProtKB-SubCell"/>
</dbReference>
<dbReference type="GO" id="GO:0009505">
    <property type="term" value="C:plant-type cell wall"/>
    <property type="evidence" value="ECO:0007005"/>
    <property type="project" value="TAIR"/>
</dbReference>
<dbReference type="GO" id="GO:0009536">
    <property type="term" value="C:plastid"/>
    <property type="evidence" value="ECO:0007005"/>
    <property type="project" value="TAIR"/>
</dbReference>
<dbReference type="GO" id="GO:0004128">
    <property type="term" value="F:cytochrome-b5 reductase activity, acting on NAD(P)H"/>
    <property type="evidence" value="ECO:0000314"/>
    <property type="project" value="TAIR"/>
</dbReference>
<dbReference type="GO" id="GO:0022900">
    <property type="term" value="P:electron transport chain"/>
    <property type="evidence" value="ECO:0000314"/>
    <property type="project" value="TAIR"/>
</dbReference>
<dbReference type="CDD" id="cd06183">
    <property type="entry name" value="cyt_b5_reduct_like"/>
    <property type="match status" value="1"/>
</dbReference>
<dbReference type="FunFam" id="2.40.30.10:FF:000032">
    <property type="entry name" value="NADH-cytochrome b5 reductase"/>
    <property type="match status" value="1"/>
</dbReference>
<dbReference type="FunFam" id="3.40.50.80:FF:000019">
    <property type="entry name" value="NADH-cytochrome b5 reductase"/>
    <property type="match status" value="1"/>
</dbReference>
<dbReference type="Gene3D" id="3.40.50.80">
    <property type="entry name" value="Nucleotide-binding domain of ferredoxin-NADP reductase (FNR) module"/>
    <property type="match status" value="1"/>
</dbReference>
<dbReference type="Gene3D" id="2.40.30.10">
    <property type="entry name" value="Translation factors"/>
    <property type="match status" value="1"/>
</dbReference>
<dbReference type="InterPro" id="IPR001834">
    <property type="entry name" value="CBR-like"/>
</dbReference>
<dbReference type="InterPro" id="IPR008333">
    <property type="entry name" value="Cbr1-like_FAD-bd_dom"/>
</dbReference>
<dbReference type="InterPro" id="IPR017927">
    <property type="entry name" value="FAD-bd_FR_type"/>
</dbReference>
<dbReference type="InterPro" id="IPR001709">
    <property type="entry name" value="Flavoprot_Pyr_Nucl_cyt_Rdtase"/>
</dbReference>
<dbReference type="InterPro" id="IPR039261">
    <property type="entry name" value="FNR_nucleotide-bd"/>
</dbReference>
<dbReference type="InterPro" id="IPR001433">
    <property type="entry name" value="OxRdtase_FAD/NAD-bd"/>
</dbReference>
<dbReference type="InterPro" id="IPR017938">
    <property type="entry name" value="Riboflavin_synthase-like_b-brl"/>
</dbReference>
<dbReference type="PANTHER" id="PTHR19370">
    <property type="entry name" value="NADH-CYTOCHROME B5 REDUCTASE"/>
    <property type="match status" value="1"/>
</dbReference>
<dbReference type="PANTHER" id="PTHR19370:SF184">
    <property type="entry name" value="NADH-CYTOCHROME B5 REDUCTASE-LIKE"/>
    <property type="match status" value="1"/>
</dbReference>
<dbReference type="Pfam" id="PF00970">
    <property type="entry name" value="FAD_binding_6"/>
    <property type="match status" value="1"/>
</dbReference>
<dbReference type="Pfam" id="PF00175">
    <property type="entry name" value="NAD_binding_1"/>
    <property type="match status" value="1"/>
</dbReference>
<dbReference type="PRINTS" id="PR00406">
    <property type="entry name" value="CYTB5RDTASE"/>
</dbReference>
<dbReference type="PRINTS" id="PR00371">
    <property type="entry name" value="FPNCR"/>
</dbReference>
<dbReference type="SUPFAM" id="SSF52343">
    <property type="entry name" value="Ferredoxin reductase-like, C-terminal NADP-linked domain"/>
    <property type="match status" value="1"/>
</dbReference>
<dbReference type="SUPFAM" id="SSF63380">
    <property type="entry name" value="Riboflavin synthase domain-like"/>
    <property type="match status" value="1"/>
</dbReference>
<dbReference type="PROSITE" id="PS51384">
    <property type="entry name" value="FAD_FR"/>
    <property type="match status" value="1"/>
</dbReference>
<organism>
    <name type="scientific">Arabidopsis thaliana</name>
    <name type="common">Mouse-ear cress</name>
    <dbReference type="NCBI Taxonomy" id="3702"/>
    <lineage>
        <taxon>Eukaryota</taxon>
        <taxon>Viridiplantae</taxon>
        <taxon>Streptophyta</taxon>
        <taxon>Embryophyta</taxon>
        <taxon>Tracheophyta</taxon>
        <taxon>Spermatophyta</taxon>
        <taxon>Magnoliopsida</taxon>
        <taxon>eudicotyledons</taxon>
        <taxon>Gunneridae</taxon>
        <taxon>Pentapetalae</taxon>
        <taxon>rosids</taxon>
        <taxon>malvids</taxon>
        <taxon>Brassicales</taxon>
        <taxon>Brassicaceae</taxon>
        <taxon>Camelineae</taxon>
        <taxon>Arabidopsis</taxon>
    </lineage>
</organism>
<evidence type="ECO:0000250" key="1"/>
<evidence type="ECO:0000250" key="2">
    <source>
        <dbReference type="UniProtKB" id="P83291"/>
    </source>
</evidence>
<evidence type="ECO:0000250" key="3">
    <source>
        <dbReference type="UniProtKB" id="P83686"/>
    </source>
</evidence>
<evidence type="ECO:0000255" key="4"/>
<evidence type="ECO:0000255" key="5">
    <source>
        <dbReference type="PROSITE-ProRule" id="PRU00716"/>
    </source>
</evidence>
<evidence type="ECO:0000269" key="6">
    <source>
    </source>
</evidence>
<evidence type="ECO:0000269" key="7">
    <source>
    </source>
</evidence>
<evidence type="ECO:0000269" key="8">
    <source>
    </source>
</evidence>
<evidence type="ECO:0000269" key="9">
    <source>
    </source>
</evidence>
<evidence type="ECO:0000269" key="10">
    <source>
    </source>
</evidence>
<evidence type="ECO:0000303" key="11">
    <source>
    </source>
</evidence>
<evidence type="ECO:0000303" key="12">
    <source>
    </source>
</evidence>
<evidence type="ECO:0000305" key="13"/>
<evidence type="ECO:0000312" key="14">
    <source>
        <dbReference type="Araport" id="AT5G17770"/>
    </source>
</evidence>
<evidence type="ECO:0000312" key="15">
    <source>
        <dbReference type="EMBL" id="BAB09576.1"/>
    </source>
</evidence>
<accession>Q9ZNT1</accession>
<accession>Q93YQ9</accession>
<comment type="function">
    <text evidence="6 10">Reductase transferring electrons from NADH to cytochrome b5. Required for the NADH-dependent electron transfer involved in the desaturation and hydroxylation of fatty acids and in the desaturation of sterol precursors. No activity with NADPH as electron donor.</text>
</comment>
<comment type="catalytic activity">
    <reaction evidence="6 10">
        <text>2 Fe(III)-[cytochrome b5] + NADH = 2 Fe(II)-[cytochrome b5] + NAD(+) + H(+)</text>
        <dbReference type="Rhea" id="RHEA:46680"/>
        <dbReference type="Rhea" id="RHEA-COMP:10438"/>
        <dbReference type="Rhea" id="RHEA-COMP:10439"/>
        <dbReference type="ChEBI" id="CHEBI:15378"/>
        <dbReference type="ChEBI" id="CHEBI:29033"/>
        <dbReference type="ChEBI" id="CHEBI:29034"/>
        <dbReference type="ChEBI" id="CHEBI:57540"/>
        <dbReference type="ChEBI" id="CHEBI:57945"/>
        <dbReference type="EC" id="1.6.2.2"/>
    </reaction>
    <physiologicalReaction direction="left-to-right" evidence="6 10">
        <dbReference type="Rhea" id="RHEA:46681"/>
    </physiologicalReaction>
</comment>
<comment type="cofactor">
    <cofactor evidence="3">
        <name>FAD</name>
        <dbReference type="ChEBI" id="CHEBI:57692"/>
    </cofactor>
</comment>
<comment type="biophysicochemical properties">
    <kinetics>
        <KM evidence="10">1.5 uM for NADH</KM>
    </kinetics>
</comment>
<comment type="subunit">
    <text evidence="1 7">Monomer. Interacts with AKR2A (PubMed:20215589).</text>
</comment>
<comment type="subcellular location">
    <subcellularLocation>
        <location evidence="9">Mitochondrion outer membrane</location>
        <topology evidence="9">Single-pass membrane protein</topology>
    </subcellularLocation>
</comment>
<comment type="tissue specificity">
    <text evidence="10">Expressed in roots, stems, flowers and siliques. Detected in leaves.</text>
</comment>
<comment type="similarity">
    <text evidence="13">Belongs to the flavoprotein pyridine nucleotide cytochrome reductase family.</text>
</comment>
<comment type="sequence caution" evidence="13">
    <conflict type="frameshift">
        <sequence resource="EMBL-CDS" id="AAL24304"/>
    </conflict>
</comment>